<organism>
    <name type="scientific">Homo sapiens</name>
    <name type="common">Human</name>
    <dbReference type="NCBI Taxonomy" id="9606"/>
    <lineage>
        <taxon>Eukaryota</taxon>
        <taxon>Metazoa</taxon>
        <taxon>Chordata</taxon>
        <taxon>Craniata</taxon>
        <taxon>Vertebrata</taxon>
        <taxon>Euteleostomi</taxon>
        <taxon>Mammalia</taxon>
        <taxon>Eutheria</taxon>
        <taxon>Euarchontoglires</taxon>
        <taxon>Primates</taxon>
        <taxon>Haplorrhini</taxon>
        <taxon>Catarrhini</taxon>
        <taxon>Hominidae</taxon>
        <taxon>Homo</taxon>
    </lineage>
</organism>
<gene>
    <name type="primary">ADORA2A</name>
    <name type="synonym">ADORA2</name>
</gene>
<dbReference type="EMBL" id="M97370">
    <property type="protein sequence ID" value="AAA58356.1"/>
    <property type="status" value="ALT_INIT"/>
    <property type="molecule type" value="mRNA"/>
</dbReference>
<dbReference type="EMBL" id="X68486">
    <property type="protein sequence ID" value="CAA48504.1"/>
    <property type="molecule type" value="mRNA"/>
</dbReference>
<dbReference type="EMBL" id="S46950">
    <property type="protein sequence ID" value="AAB23956.1"/>
    <property type="molecule type" value="mRNA"/>
</dbReference>
<dbReference type="EMBL" id="U40771">
    <property type="protein sequence ID" value="AAA83270.1"/>
    <property type="molecule type" value="Genomic_DNA"/>
</dbReference>
<dbReference type="EMBL" id="U40770">
    <property type="protein sequence ID" value="AAA83270.1"/>
    <property type="status" value="JOINED"/>
    <property type="molecule type" value="Genomic_DNA"/>
</dbReference>
<dbReference type="EMBL" id="AY136747">
    <property type="protein sequence ID" value="AAN01273.1"/>
    <property type="molecule type" value="mRNA"/>
</dbReference>
<dbReference type="EMBL" id="CR456367">
    <property type="protein sequence ID" value="CAG30253.1"/>
    <property type="molecule type" value="mRNA"/>
</dbReference>
<dbReference type="EMBL" id="BT006999">
    <property type="protein sequence ID" value="AAP35645.1"/>
    <property type="molecule type" value="mRNA"/>
</dbReference>
<dbReference type="EMBL" id="AK312946">
    <property type="protein sequence ID" value="BAG35787.1"/>
    <property type="molecule type" value="mRNA"/>
</dbReference>
<dbReference type="EMBL" id="CH471095">
    <property type="protein sequence ID" value="EAW59658.1"/>
    <property type="molecule type" value="Genomic_DNA"/>
</dbReference>
<dbReference type="EMBL" id="BC013780">
    <property type="protein sequence ID" value="AAH13780.1"/>
    <property type="molecule type" value="mRNA"/>
</dbReference>
<dbReference type="CCDS" id="CCDS13826.1"/>
<dbReference type="PIR" id="A48978">
    <property type="entry name" value="A48978"/>
</dbReference>
<dbReference type="RefSeq" id="NP_000666.2">
    <property type="nucleotide sequence ID" value="NM_000675.5"/>
</dbReference>
<dbReference type="RefSeq" id="NP_001265426.1">
    <property type="nucleotide sequence ID" value="NM_001278497.2"/>
</dbReference>
<dbReference type="RefSeq" id="NP_001265427.1">
    <property type="nucleotide sequence ID" value="NM_001278498.2"/>
</dbReference>
<dbReference type="RefSeq" id="NP_001265428.1">
    <property type="nucleotide sequence ID" value="NM_001278499.2"/>
</dbReference>
<dbReference type="RefSeq" id="NP_001265429.1">
    <property type="nucleotide sequence ID" value="NM_001278500.2"/>
</dbReference>
<dbReference type="PDB" id="2YDO">
    <property type="method" value="X-ray"/>
    <property type="resolution" value="3.00 A"/>
    <property type="chains" value="A=1-317"/>
</dbReference>
<dbReference type="PDB" id="2YDV">
    <property type="method" value="X-ray"/>
    <property type="resolution" value="2.60 A"/>
    <property type="chains" value="A=1-317"/>
</dbReference>
<dbReference type="PDB" id="3EML">
    <property type="method" value="X-ray"/>
    <property type="resolution" value="2.60 A"/>
    <property type="chains" value="A=2-208, A=222-316"/>
</dbReference>
<dbReference type="PDB" id="3PWH">
    <property type="method" value="X-ray"/>
    <property type="resolution" value="3.30 A"/>
    <property type="chains" value="A=1-317"/>
</dbReference>
<dbReference type="PDB" id="3QAK">
    <property type="method" value="X-ray"/>
    <property type="resolution" value="2.71 A"/>
    <property type="chains" value="A=2-208, A=222-316"/>
</dbReference>
<dbReference type="PDB" id="3REY">
    <property type="method" value="X-ray"/>
    <property type="resolution" value="3.31 A"/>
    <property type="chains" value="A=1-317"/>
</dbReference>
<dbReference type="PDB" id="3RFM">
    <property type="method" value="X-ray"/>
    <property type="resolution" value="3.60 A"/>
    <property type="chains" value="A=1-317"/>
</dbReference>
<dbReference type="PDB" id="3UZA">
    <property type="method" value="X-ray"/>
    <property type="resolution" value="3.27 A"/>
    <property type="chains" value="A=1-317"/>
</dbReference>
<dbReference type="PDB" id="3UZC">
    <property type="method" value="X-ray"/>
    <property type="resolution" value="3.34 A"/>
    <property type="chains" value="A=1-317"/>
</dbReference>
<dbReference type="PDB" id="3VG9">
    <property type="method" value="X-ray"/>
    <property type="resolution" value="2.70 A"/>
    <property type="chains" value="A=1-316"/>
</dbReference>
<dbReference type="PDB" id="3VGA">
    <property type="method" value="X-ray"/>
    <property type="resolution" value="3.10 A"/>
    <property type="chains" value="A=1-316"/>
</dbReference>
<dbReference type="PDB" id="4EIY">
    <property type="method" value="X-ray"/>
    <property type="resolution" value="1.80 A"/>
    <property type="chains" value="A=2-208, A=219-316"/>
</dbReference>
<dbReference type="PDB" id="4UG2">
    <property type="method" value="X-ray"/>
    <property type="resolution" value="2.60 A"/>
    <property type="chains" value="A/B=1-317"/>
</dbReference>
<dbReference type="PDB" id="4UHR">
    <property type="method" value="X-ray"/>
    <property type="resolution" value="2.60 A"/>
    <property type="chains" value="A=1-317"/>
</dbReference>
<dbReference type="PDB" id="5G53">
    <property type="method" value="X-ray"/>
    <property type="resolution" value="3.40 A"/>
    <property type="chains" value="A/B=1-308"/>
</dbReference>
<dbReference type="PDB" id="5IU4">
    <property type="method" value="X-ray"/>
    <property type="resolution" value="1.72 A"/>
    <property type="chains" value="A=2-208, A=219-318"/>
</dbReference>
<dbReference type="PDB" id="5IU7">
    <property type="method" value="X-ray"/>
    <property type="resolution" value="1.90 A"/>
    <property type="chains" value="A=2-208, A=219-315"/>
</dbReference>
<dbReference type="PDB" id="5IU8">
    <property type="method" value="X-ray"/>
    <property type="resolution" value="2.00 A"/>
    <property type="chains" value="A=2-208, A=219-315"/>
</dbReference>
<dbReference type="PDB" id="5IUA">
    <property type="method" value="X-ray"/>
    <property type="resolution" value="2.20 A"/>
    <property type="chains" value="A=2-208, A=219-315"/>
</dbReference>
<dbReference type="PDB" id="5IUB">
    <property type="method" value="X-ray"/>
    <property type="resolution" value="2.10 A"/>
    <property type="chains" value="A=2-208, A=219-315"/>
</dbReference>
<dbReference type="PDB" id="5JTB">
    <property type="method" value="X-ray"/>
    <property type="resolution" value="2.80 A"/>
    <property type="chains" value="A=2-212, A=219-316"/>
</dbReference>
<dbReference type="PDB" id="5K2A">
    <property type="method" value="X-ray"/>
    <property type="resolution" value="2.50 A"/>
    <property type="chains" value="A=2-208, A=219-316"/>
</dbReference>
<dbReference type="PDB" id="5K2B">
    <property type="method" value="X-ray"/>
    <property type="resolution" value="2.50 A"/>
    <property type="chains" value="A=2-208, A=219-316"/>
</dbReference>
<dbReference type="PDB" id="5K2C">
    <property type="method" value="X-ray"/>
    <property type="resolution" value="1.90 A"/>
    <property type="chains" value="A=2-208, A=219-316"/>
</dbReference>
<dbReference type="PDB" id="5K2D">
    <property type="method" value="X-ray"/>
    <property type="resolution" value="1.90 A"/>
    <property type="chains" value="A=2-208, A=219-316"/>
</dbReference>
<dbReference type="PDB" id="5MZJ">
    <property type="method" value="X-ray"/>
    <property type="resolution" value="2.00 A"/>
    <property type="chains" value="A=2-208, A=219-318"/>
</dbReference>
<dbReference type="PDB" id="5MZP">
    <property type="method" value="X-ray"/>
    <property type="resolution" value="2.10 A"/>
    <property type="chains" value="A=2-208, A=219-317"/>
</dbReference>
<dbReference type="PDB" id="5N2R">
    <property type="method" value="X-ray"/>
    <property type="resolution" value="2.80 A"/>
    <property type="chains" value="A=2-208, A=219-318"/>
</dbReference>
<dbReference type="PDB" id="5NLX">
    <property type="method" value="X-ray"/>
    <property type="resolution" value="2.14 A"/>
    <property type="chains" value="A=2-317"/>
</dbReference>
<dbReference type="PDB" id="5NM2">
    <property type="method" value="X-ray"/>
    <property type="resolution" value="1.95 A"/>
    <property type="chains" value="A=2-317"/>
</dbReference>
<dbReference type="PDB" id="5NM4">
    <property type="method" value="X-ray"/>
    <property type="resolution" value="1.70 A"/>
    <property type="chains" value="A=2-317"/>
</dbReference>
<dbReference type="PDB" id="5OLG">
    <property type="method" value="X-ray"/>
    <property type="resolution" value="1.87 A"/>
    <property type="chains" value="A=2-208, A=219-317"/>
</dbReference>
<dbReference type="PDB" id="5OLH">
    <property type="method" value="X-ray"/>
    <property type="resolution" value="2.60 A"/>
    <property type="chains" value="A=2-208, A=219-317"/>
</dbReference>
<dbReference type="PDB" id="5OLO">
    <property type="method" value="X-ray"/>
    <property type="resolution" value="3.10 A"/>
    <property type="chains" value="A=2-208, A=219-318"/>
</dbReference>
<dbReference type="PDB" id="5OLV">
    <property type="method" value="X-ray"/>
    <property type="resolution" value="2.00 A"/>
    <property type="chains" value="A=2-208, A=219-317"/>
</dbReference>
<dbReference type="PDB" id="5OLZ">
    <property type="method" value="X-ray"/>
    <property type="resolution" value="1.90 A"/>
    <property type="chains" value="A=2-208, A=219-317"/>
</dbReference>
<dbReference type="PDB" id="5OM1">
    <property type="method" value="X-ray"/>
    <property type="resolution" value="2.10 A"/>
    <property type="chains" value="A=2-208, A=219-317"/>
</dbReference>
<dbReference type="PDB" id="5OM4">
    <property type="method" value="X-ray"/>
    <property type="resolution" value="2.00 A"/>
    <property type="chains" value="A=2-208, A=219-317"/>
</dbReference>
<dbReference type="PDB" id="5UIG">
    <property type="method" value="X-ray"/>
    <property type="resolution" value="3.50 A"/>
    <property type="chains" value="A=1-191, A=219-316"/>
</dbReference>
<dbReference type="PDB" id="5UVI">
    <property type="method" value="X-ray"/>
    <property type="resolution" value="3.20 A"/>
    <property type="chains" value="A=2-212, A=219-316"/>
</dbReference>
<dbReference type="PDB" id="5VRA">
    <property type="method" value="X-ray"/>
    <property type="resolution" value="2.35 A"/>
    <property type="chains" value="A=2-208, A=219-316"/>
</dbReference>
<dbReference type="PDB" id="5WF5">
    <property type="method" value="X-ray"/>
    <property type="resolution" value="2.60 A"/>
    <property type="chains" value="A=2-208, A=222-316"/>
</dbReference>
<dbReference type="PDB" id="5WF6">
    <property type="method" value="X-ray"/>
    <property type="resolution" value="2.90 A"/>
    <property type="chains" value="A=2-208, A=222-316"/>
</dbReference>
<dbReference type="PDB" id="6AQF">
    <property type="method" value="X-ray"/>
    <property type="resolution" value="2.51 A"/>
    <property type="chains" value="A=2-208, A=219-316"/>
</dbReference>
<dbReference type="PDB" id="6GDG">
    <property type="method" value="EM"/>
    <property type="resolution" value="4.11 A"/>
    <property type="chains" value="A=8-316"/>
</dbReference>
<dbReference type="PDB" id="6GT3">
    <property type="method" value="X-ray"/>
    <property type="resolution" value="2.00 A"/>
    <property type="chains" value="A=2-208, A=219-317"/>
</dbReference>
<dbReference type="PDB" id="6JZH">
    <property type="method" value="X-ray"/>
    <property type="resolution" value="2.25 A"/>
    <property type="chains" value="A=2-208, A=219-316"/>
</dbReference>
<dbReference type="PDB" id="6LPJ">
    <property type="method" value="X-ray"/>
    <property type="resolution" value="1.80 A"/>
    <property type="chains" value="A=2-208, A=219-316"/>
</dbReference>
<dbReference type="PDB" id="6LPK">
    <property type="method" value="X-ray"/>
    <property type="resolution" value="1.80 A"/>
    <property type="chains" value="A=2-208, A=219-316"/>
</dbReference>
<dbReference type="PDB" id="6LPL">
    <property type="method" value="X-ray"/>
    <property type="resolution" value="2.00 A"/>
    <property type="chains" value="A=2-208, A=219-316"/>
</dbReference>
<dbReference type="PDB" id="6MH8">
    <property type="method" value="X-ray"/>
    <property type="resolution" value="4.20 A"/>
    <property type="chains" value="A=2-208, A=219-316"/>
</dbReference>
<dbReference type="PDB" id="6PS7">
    <property type="method" value="X-ray"/>
    <property type="resolution" value="1.85 A"/>
    <property type="chains" value="A=2-208, A=219-316"/>
</dbReference>
<dbReference type="PDB" id="6S0L">
    <property type="method" value="X-ray"/>
    <property type="resolution" value="2.65 A"/>
    <property type="chains" value="A=2-317"/>
</dbReference>
<dbReference type="PDB" id="6S0Q">
    <property type="method" value="X-ray"/>
    <property type="resolution" value="2.65 A"/>
    <property type="chains" value="A=2-208, A=219-317"/>
</dbReference>
<dbReference type="PDB" id="6WQA">
    <property type="method" value="X-ray"/>
    <property type="resolution" value="2.00 A"/>
    <property type="chains" value="A=2-208, A=219-316"/>
</dbReference>
<dbReference type="PDB" id="6ZDR">
    <property type="method" value="X-ray"/>
    <property type="resolution" value="1.92 A"/>
    <property type="chains" value="A=2-208, A=219-317"/>
</dbReference>
<dbReference type="PDB" id="6ZDV">
    <property type="method" value="X-ray"/>
    <property type="resolution" value="2.13 A"/>
    <property type="chains" value="A=2-208, A=219-317"/>
</dbReference>
<dbReference type="PDB" id="7ARO">
    <property type="method" value="X-ray"/>
    <property type="resolution" value="3.12 A"/>
    <property type="chains" value="A=2-208, A=219-317"/>
</dbReference>
<dbReference type="PDB" id="7EZC">
    <property type="method" value="X-ray"/>
    <property type="resolution" value="3.80 A"/>
    <property type="chains" value="A/B=2-208, A/B=219-308"/>
</dbReference>
<dbReference type="PDB" id="7PX4">
    <property type="method" value="X-ray"/>
    <property type="resolution" value="2.25 A"/>
    <property type="chains" value="A=2-208, A=219-316"/>
</dbReference>
<dbReference type="PDB" id="7PYR">
    <property type="method" value="X-ray"/>
    <property type="resolution" value="2.60 A"/>
    <property type="chains" value="A=2-208, A=219-316"/>
</dbReference>
<dbReference type="PDB" id="7RM5">
    <property type="method" value="EM"/>
    <property type="resolution" value="2.79 A"/>
    <property type="chains" value="A=2-208, A=219-316"/>
</dbReference>
<dbReference type="PDB" id="7T32">
    <property type="method" value="EM"/>
    <property type="resolution" value="3.40 A"/>
    <property type="chains" value="A=8-208, A=219-302"/>
</dbReference>
<dbReference type="PDB" id="8A2O">
    <property type="method" value="X-ray"/>
    <property type="resolution" value="3.45 A"/>
    <property type="chains" value="A=2-208, A=219-316"/>
</dbReference>
<dbReference type="PDB" id="8A2P">
    <property type="method" value="X-ray"/>
    <property type="resolution" value="3.50 A"/>
    <property type="chains" value="A=2-208, A=219-316"/>
</dbReference>
<dbReference type="PDB" id="8C9W">
    <property type="method" value="X-ray"/>
    <property type="resolution" value="2.11 A"/>
    <property type="chains" value="A=2-208, A=219-316"/>
</dbReference>
<dbReference type="PDB" id="8CIC">
    <property type="method" value="X-ray"/>
    <property type="resolution" value="2.10 A"/>
    <property type="chains" value="A=2-208, A=219-317"/>
</dbReference>
<dbReference type="PDB" id="8CU6">
    <property type="method" value="X-ray"/>
    <property type="resolution" value="2.80 A"/>
    <property type="chains" value="A=2-208, A=219-316"/>
</dbReference>
<dbReference type="PDB" id="8CU7">
    <property type="method" value="X-ray"/>
    <property type="resolution" value="2.05 A"/>
    <property type="chains" value="A=2-208, A=219-316"/>
</dbReference>
<dbReference type="PDB" id="8DU3">
    <property type="method" value="X-ray"/>
    <property type="resolution" value="2.50 A"/>
    <property type="chains" value="A=2-208, A=219-316"/>
</dbReference>
<dbReference type="PDB" id="8GNE">
    <property type="method" value="X-ray"/>
    <property type="resolution" value="2.30 A"/>
    <property type="chains" value="A=2-208, A=219-316"/>
</dbReference>
<dbReference type="PDB" id="8GNG">
    <property type="method" value="X-ray"/>
    <property type="resolution" value="3.20 A"/>
    <property type="chains" value="A/X=1-316"/>
</dbReference>
<dbReference type="PDB" id="8JWY">
    <property type="method" value="X-ray"/>
    <property type="resolution" value="2.33 A"/>
    <property type="chains" value="A=2-208, A=222-316"/>
</dbReference>
<dbReference type="PDB" id="8JWZ">
    <property type="method" value="X-ray"/>
    <property type="resolution" value="2.37 A"/>
    <property type="chains" value="A=2-208, A=222-316"/>
</dbReference>
<dbReference type="PDB" id="8PWN">
    <property type="method" value="X-ray"/>
    <property type="resolution" value="2.40 A"/>
    <property type="chains" value="A=2-208, A=219-318"/>
</dbReference>
<dbReference type="PDB" id="8RQQ">
    <property type="method" value="X-ray"/>
    <property type="resolution" value="2.37 A"/>
    <property type="chains" value="A=2-208, A=219-316"/>
</dbReference>
<dbReference type="PDB" id="8RVW">
    <property type="method" value="X-ray"/>
    <property type="resolution" value="2.65 A"/>
    <property type="chains" value="A=2-317"/>
</dbReference>
<dbReference type="PDB" id="8RW0">
    <property type="method" value="X-ray"/>
    <property type="resolution" value="1.94 A"/>
    <property type="chains" value="A=2-317"/>
</dbReference>
<dbReference type="PDB" id="8RW4">
    <property type="method" value="X-ray"/>
    <property type="resolution" value="2.20 A"/>
    <property type="chains" value="A=2-317"/>
</dbReference>
<dbReference type="PDB" id="8RW7">
    <property type="method" value="X-ray"/>
    <property type="resolution" value="2.25 A"/>
    <property type="chains" value="A=2-317"/>
</dbReference>
<dbReference type="PDB" id="8RWC">
    <property type="method" value="X-ray"/>
    <property type="resolution" value="2.31 A"/>
    <property type="chains" value="A=2-317"/>
</dbReference>
<dbReference type="PDB" id="8RWD">
    <property type="method" value="X-ray"/>
    <property type="resolution" value="2.05 A"/>
    <property type="chains" value="A=2-317"/>
</dbReference>
<dbReference type="PDB" id="8RWE">
    <property type="method" value="X-ray"/>
    <property type="resolution" value="2.20 A"/>
    <property type="chains" value="A=2-317"/>
</dbReference>
<dbReference type="PDB" id="8RWH">
    <property type="method" value="X-ray"/>
    <property type="resolution" value="2.45 A"/>
    <property type="chains" value="A=2-317"/>
</dbReference>
<dbReference type="PDB" id="8RWI">
    <property type="method" value="X-ray"/>
    <property type="resolution" value="2.80 A"/>
    <property type="chains" value="A=2-317"/>
</dbReference>
<dbReference type="PDB" id="8RWX">
    <property type="method" value="X-ray"/>
    <property type="resolution" value="3.05 A"/>
    <property type="chains" value="A=2-317"/>
</dbReference>
<dbReference type="PDB" id="8UGW">
    <property type="method" value="X-ray"/>
    <property type="resolution" value="3.90 A"/>
    <property type="chains" value="A=2-322"/>
</dbReference>
<dbReference type="PDB" id="8WDT">
    <property type="method" value="X-ray"/>
    <property type="resolution" value="3.34 A"/>
    <property type="chains" value="A=2-316"/>
</dbReference>
<dbReference type="PDB" id="9FUP">
    <property type="method" value="X-ray"/>
    <property type="resolution" value="2.50 A"/>
    <property type="chains" value="A=2-317"/>
</dbReference>
<dbReference type="PDBsum" id="2YDO"/>
<dbReference type="PDBsum" id="2YDV"/>
<dbReference type="PDBsum" id="3EML"/>
<dbReference type="PDBsum" id="3PWH"/>
<dbReference type="PDBsum" id="3QAK"/>
<dbReference type="PDBsum" id="3REY"/>
<dbReference type="PDBsum" id="3RFM"/>
<dbReference type="PDBsum" id="3UZA"/>
<dbReference type="PDBsum" id="3UZC"/>
<dbReference type="PDBsum" id="3VG9"/>
<dbReference type="PDBsum" id="3VGA"/>
<dbReference type="PDBsum" id="4EIY"/>
<dbReference type="PDBsum" id="4UG2"/>
<dbReference type="PDBsum" id="4UHR"/>
<dbReference type="PDBsum" id="5G53"/>
<dbReference type="PDBsum" id="5IU4"/>
<dbReference type="PDBsum" id="5IU7"/>
<dbReference type="PDBsum" id="5IU8"/>
<dbReference type="PDBsum" id="5IUA"/>
<dbReference type="PDBsum" id="5IUB"/>
<dbReference type="PDBsum" id="5JTB"/>
<dbReference type="PDBsum" id="5K2A"/>
<dbReference type="PDBsum" id="5K2B"/>
<dbReference type="PDBsum" id="5K2C"/>
<dbReference type="PDBsum" id="5K2D"/>
<dbReference type="PDBsum" id="5MZJ"/>
<dbReference type="PDBsum" id="5MZP"/>
<dbReference type="PDBsum" id="5N2R"/>
<dbReference type="PDBsum" id="5NLX"/>
<dbReference type="PDBsum" id="5NM2"/>
<dbReference type="PDBsum" id="5NM4"/>
<dbReference type="PDBsum" id="5OLG"/>
<dbReference type="PDBsum" id="5OLH"/>
<dbReference type="PDBsum" id="5OLO"/>
<dbReference type="PDBsum" id="5OLV"/>
<dbReference type="PDBsum" id="5OLZ"/>
<dbReference type="PDBsum" id="5OM1"/>
<dbReference type="PDBsum" id="5OM4"/>
<dbReference type="PDBsum" id="5UIG"/>
<dbReference type="PDBsum" id="5UVI"/>
<dbReference type="PDBsum" id="5VRA"/>
<dbReference type="PDBsum" id="5WF5"/>
<dbReference type="PDBsum" id="5WF6"/>
<dbReference type="PDBsum" id="6AQF"/>
<dbReference type="PDBsum" id="6GDG"/>
<dbReference type="PDBsum" id="6GT3"/>
<dbReference type="PDBsum" id="6JZH"/>
<dbReference type="PDBsum" id="6LPJ"/>
<dbReference type="PDBsum" id="6LPK"/>
<dbReference type="PDBsum" id="6LPL"/>
<dbReference type="PDBsum" id="6MH8"/>
<dbReference type="PDBsum" id="6PS7"/>
<dbReference type="PDBsum" id="6S0L"/>
<dbReference type="PDBsum" id="6S0Q"/>
<dbReference type="PDBsum" id="6WQA"/>
<dbReference type="PDBsum" id="6ZDR"/>
<dbReference type="PDBsum" id="6ZDV"/>
<dbReference type="PDBsum" id="7ARO"/>
<dbReference type="PDBsum" id="7EZC"/>
<dbReference type="PDBsum" id="7PX4"/>
<dbReference type="PDBsum" id="7PYR"/>
<dbReference type="PDBsum" id="7RM5"/>
<dbReference type="PDBsum" id="7T32"/>
<dbReference type="PDBsum" id="8A2O"/>
<dbReference type="PDBsum" id="8A2P"/>
<dbReference type="PDBsum" id="8C9W"/>
<dbReference type="PDBsum" id="8CIC"/>
<dbReference type="PDBsum" id="8CU6"/>
<dbReference type="PDBsum" id="8CU7"/>
<dbReference type="PDBsum" id="8DU3"/>
<dbReference type="PDBsum" id="8GNE"/>
<dbReference type="PDBsum" id="8GNG"/>
<dbReference type="PDBsum" id="8JWY"/>
<dbReference type="PDBsum" id="8JWZ"/>
<dbReference type="PDBsum" id="8PWN"/>
<dbReference type="PDBsum" id="8RQQ"/>
<dbReference type="PDBsum" id="8RVW"/>
<dbReference type="PDBsum" id="8RW0"/>
<dbReference type="PDBsum" id="8RW4"/>
<dbReference type="PDBsum" id="8RW7"/>
<dbReference type="PDBsum" id="8RWC"/>
<dbReference type="PDBsum" id="8RWD"/>
<dbReference type="PDBsum" id="8RWE"/>
<dbReference type="PDBsum" id="8RWH"/>
<dbReference type="PDBsum" id="8RWI"/>
<dbReference type="PDBsum" id="8RWX"/>
<dbReference type="PDBsum" id="8UGW"/>
<dbReference type="PDBsum" id="8WDT"/>
<dbReference type="PDBsum" id="9FUP"/>
<dbReference type="EMDB" id="EMD-24551"/>
<dbReference type="EMDB" id="EMD-25648"/>
<dbReference type="EMDB" id="EMD-29586"/>
<dbReference type="EMDB" id="EMD-4390"/>
<dbReference type="SMR" id="P29274"/>
<dbReference type="BioGRID" id="106647">
    <property type="interactions" value="27"/>
</dbReference>
<dbReference type="CORUM" id="P29274"/>
<dbReference type="FunCoup" id="P29274">
    <property type="interactions" value="1456"/>
</dbReference>
<dbReference type="IntAct" id="P29274">
    <property type="interactions" value="24"/>
</dbReference>
<dbReference type="MINT" id="P29274"/>
<dbReference type="STRING" id="9606.ENSP00000480012"/>
<dbReference type="BindingDB" id="P29274"/>
<dbReference type="ChEMBL" id="CHEMBL251"/>
<dbReference type="DrugBank" id="DB07954">
    <property type="generic name" value="3-isobutyl-1-methyl-7H-xanthine"/>
</dbReference>
<dbReference type="DrugBank" id="DB08770">
    <property type="generic name" value="4-{2-[(7-amino-2-furan-2-yl[1,2,4]triazolo[1,5-a][1,3,5]triazin-5-yl)amino]ethyl}phenol"/>
</dbReference>
<dbReference type="DrugBank" id="DB02282">
    <property type="generic name" value="5'-S-methyl-5'-thioadenosine"/>
</dbReference>
<dbReference type="DrugBank" id="DB14132">
    <property type="generic name" value="8-chlorotheophylline"/>
</dbReference>
<dbReference type="DrugBank" id="DB00640">
    <property type="generic name" value="Adenosine"/>
</dbReference>
<dbReference type="DrugBank" id="DB05009">
    <property type="generic name" value="Apadenoson"/>
</dbReference>
<dbReference type="DrugBank" id="DB05191">
    <property type="generic name" value="Atl146e"/>
</dbReference>
<dbReference type="DrugBank" id="DB04853">
    <property type="generic name" value="Binodenoson"/>
</dbReference>
<dbReference type="DrugBank" id="DB14018">
    <property type="generic name" value="Bromotheophylline"/>
</dbReference>
<dbReference type="DrugBank" id="DB00201">
    <property type="generic name" value="Caffeine"/>
</dbReference>
<dbReference type="DrugBank" id="DB16125">
    <property type="generic name" value="Ciforadenant"/>
</dbReference>
<dbReference type="DrugBank" id="DB04932">
    <property type="generic name" value="Defibrotide"/>
</dbReference>
<dbReference type="DrugBank" id="DB09273">
    <property type="generic name" value="Doxofylline"/>
</dbReference>
<dbReference type="DrugBank" id="DB12946">
    <property type="generic name" value="DPCPX"/>
</dbReference>
<dbReference type="DrugBank" id="DB00651">
    <property type="generic name" value="Dyphylline"/>
</dbReference>
<dbReference type="DrugBank" id="DB00824">
    <property type="generic name" value="Enprofylline"/>
</dbReference>
<dbReference type="DrugBank" id="DB17506">
    <property type="generic name" value="Etrumadenant"/>
</dbReference>
<dbReference type="DrugBank" id="DB12295">
    <property type="generic name" value="Evodenoson"/>
</dbReference>
<dbReference type="DrugBank" id="DB16192">
    <property type="generic name" value="Imaradenant"/>
</dbReference>
<dbReference type="DrugBank" id="DB19129">
    <property type="generic name" value="Inupadenant"/>
</dbReference>
<dbReference type="DrugBank" id="DB11757">
    <property type="generic name" value="Istradefylline"/>
</dbReference>
<dbReference type="DrugBank" id="DB17080">
    <property type="generic name" value="KW-6356"/>
</dbReference>
<dbReference type="DrugBank" id="DB00555">
    <property type="generic name" value="Lamotrigine"/>
</dbReference>
<dbReference type="DrugBank" id="DB00358">
    <property type="generic name" value="Mefloquine"/>
</dbReference>
<dbReference type="DrugBank" id="DB00683">
    <property type="generic name" value="Midazolam"/>
</dbReference>
<dbReference type="DrugBank" id="DB01303">
    <property type="generic name" value="Oxtriphylline"/>
</dbReference>
<dbReference type="DrugBank" id="DB00806">
    <property type="generic name" value="Pentoxifylline"/>
</dbReference>
<dbReference type="DrugBank" id="DB11864">
    <property type="generic name" value="Preladenant"/>
</dbReference>
<dbReference type="DrugBank" id="DB06213">
    <property type="generic name" value="Regadenoson"/>
</dbReference>
<dbReference type="DrugBank" id="DB12443">
    <property type="generic name" value="Sonedenoson"/>
</dbReference>
<dbReference type="DrugBank" id="DB12919">
    <property type="generic name" value="T-62"/>
</dbReference>
<dbReference type="DrugBank" id="DB18811">
    <property type="generic name" value="Taminadenant"/>
</dbReference>
<dbReference type="DrugBank" id="DB01412">
    <property type="generic name" value="Theobromine"/>
</dbReference>
<dbReference type="DrugBank" id="DB00277">
    <property type="generic name" value="Theophylline"/>
</dbReference>
<dbReference type="DrugBank" id="DB12569">
    <property type="generic name" value="Tonapofylline"/>
</dbReference>
<dbReference type="DrugBank" id="DB12203">
    <property type="generic name" value="Tozadenant"/>
</dbReference>
<dbReference type="DrugBank" id="DB12691">
    <property type="generic name" value="UK-432097"/>
</dbReference>
<dbReference type="DrugBank" id="DB06625">
    <property type="generic name" value="Vipadenant"/>
</dbReference>
<dbReference type="DrugCentral" id="P29274"/>
<dbReference type="GuidetoPHARMACOLOGY" id="19"/>
<dbReference type="TCDB" id="9.A.14.3.8">
    <property type="family name" value="the g-protein-coupled receptor (gpcr) family"/>
</dbReference>
<dbReference type="GlyCosmos" id="P29274">
    <property type="glycosylation" value="1 site, No reported glycans"/>
</dbReference>
<dbReference type="GlyGen" id="P29274">
    <property type="glycosylation" value="1 site"/>
</dbReference>
<dbReference type="iPTMnet" id="P29274"/>
<dbReference type="PhosphoSitePlus" id="P29274"/>
<dbReference type="BioMuta" id="ADORA2A"/>
<dbReference type="DMDM" id="543740"/>
<dbReference type="MassIVE" id="P29274"/>
<dbReference type="PaxDb" id="9606-ENSP00000336630"/>
<dbReference type="PeptideAtlas" id="P29274"/>
<dbReference type="ProteomicsDB" id="54531"/>
<dbReference type="ABCD" id="P29274">
    <property type="antibodies" value="3 sequenced antibodies"/>
</dbReference>
<dbReference type="Antibodypedia" id="9718">
    <property type="antibodies" value="443 antibodies from 41 providers"/>
</dbReference>
<dbReference type="DNASU" id="135"/>
<dbReference type="Ensembl" id="ENST00000337539.12">
    <property type="protein sequence ID" value="ENSP00000336630.6"/>
    <property type="gene ID" value="ENSG00000128271.22"/>
</dbReference>
<dbReference type="Ensembl" id="ENST00000610595.4">
    <property type="protein sequence ID" value="ENSP00000480012.1"/>
    <property type="gene ID" value="ENSG00000128271.22"/>
</dbReference>
<dbReference type="Ensembl" id="ENST00000611543.4">
    <property type="protein sequence ID" value="ENSP00000483102.1"/>
    <property type="gene ID" value="ENSG00000128271.22"/>
</dbReference>
<dbReference type="Ensembl" id="ENST00000618076.3">
    <property type="protein sequence ID" value="ENSP00000481552.1"/>
    <property type="gene ID" value="ENSG00000128271.22"/>
</dbReference>
<dbReference type="GeneID" id="135"/>
<dbReference type="KEGG" id="hsa:135"/>
<dbReference type="MANE-Select" id="ENST00000337539.12">
    <property type="protein sequence ID" value="ENSP00000336630.6"/>
    <property type="RefSeq nucleotide sequence ID" value="NM_000675.6"/>
    <property type="RefSeq protein sequence ID" value="NP_000666.2"/>
</dbReference>
<dbReference type="AGR" id="HGNC:263"/>
<dbReference type="CTD" id="135"/>
<dbReference type="DisGeNET" id="135"/>
<dbReference type="GeneCards" id="ADORA2A"/>
<dbReference type="HGNC" id="HGNC:263">
    <property type="gene designation" value="ADORA2A"/>
</dbReference>
<dbReference type="HPA" id="ENSG00000128271">
    <property type="expression patterns" value="Group enriched (bone marrow, brain, lymphoid tissue)"/>
</dbReference>
<dbReference type="MalaCards" id="ADORA2A"/>
<dbReference type="MIM" id="102776">
    <property type="type" value="gene"/>
</dbReference>
<dbReference type="neXtProt" id="NX_P29274"/>
<dbReference type="OpenTargets" id="ENSG00000128271"/>
<dbReference type="Orphanet" id="363549">
    <property type="disease" value="Acute encephalopathy with biphasic seizures and late reduced diffusion"/>
</dbReference>
<dbReference type="PharmGKB" id="PA24584"/>
<dbReference type="VEuPathDB" id="HostDB:ENSG00000128271"/>
<dbReference type="eggNOG" id="KOG3656">
    <property type="taxonomic scope" value="Eukaryota"/>
</dbReference>
<dbReference type="GeneTree" id="ENSGT01030000234555"/>
<dbReference type="InParanoid" id="P29274"/>
<dbReference type="OMA" id="PPLWLMY"/>
<dbReference type="OrthoDB" id="9445642at2759"/>
<dbReference type="PAN-GO" id="P29274">
    <property type="GO annotations" value="4 GO annotations based on evolutionary models"/>
</dbReference>
<dbReference type="PhylomeDB" id="P29274"/>
<dbReference type="TreeFam" id="TF325296"/>
<dbReference type="PathwayCommons" id="P29274"/>
<dbReference type="Reactome" id="R-HSA-187024">
    <property type="pathway name" value="NGF-independant TRKA activation"/>
</dbReference>
<dbReference type="Reactome" id="R-HSA-417973">
    <property type="pathway name" value="Adenosine P1 receptors"/>
</dbReference>
<dbReference type="Reactome" id="R-HSA-418555">
    <property type="pathway name" value="G alpha (s) signalling events"/>
</dbReference>
<dbReference type="Reactome" id="R-HSA-5683826">
    <property type="pathway name" value="Surfactant metabolism"/>
</dbReference>
<dbReference type="SignaLink" id="P29274"/>
<dbReference type="SIGNOR" id="P29274"/>
<dbReference type="BioGRID-ORCS" id="135">
    <property type="hits" value="14 hits in 1156 CRISPR screens"/>
</dbReference>
<dbReference type="EvolutionaryTrace" id="P29274"/>
<dbReference type="GeneWiki" id="Adenosine_A2A_receptor"/>
<dbReference type="GenomeRNAi" id="135"/>
<dbReference type="Pharos" id="P29274">
    <property type="development level" value="Tclin"/>
</dbReference>
<dbReference type="PRO" id="PR:P29274"/>
<dbReference type="Proteomes" id="UP000005640">
    <property type="component" value="Chromosome 22"/>
</dbReference>
<dbReference type="RNAct" id="P29274">
    <property type="molecule type" value="protein"/>
</dbReference>
<dbReference type="Bgee" id="ENSG00000128271">
    <property type="expression patterns" value="Expressed in putamen and 94 other cell types or tissues"/>
</dbReference>
<dbReference type="ExpressionAtlas" id="P29274">
    <property type="expression patterns" value="baseline and differential"/>
</dbReference>
<dbReference type="GO" id="GO:0032279">
    <property type="term" value="C:asymmetric synapse"/>
    <property type="evidence" value="ECO:0007669"/>
    <property type="project" value="Ensembl"/>
</dbReference>
<dbReference type="GO" id="GO:0030673">
    <property type="term" value="C:axolemma"/>
    <property type="evidence" value="ECO:0007669"/>
    <property type="project" value="Ensembl"/>
</dbReference>
<dbReference type="GO" id="GO:0030425">
    <property type="term" value="C:dendrite"/>
    <property type="evidence" value="ECO:0007669"/>
    <property type="project" value="Ensembl"/>
</dbReference>
<dbReference type="GO" id="GO:0098978">
    <property type="term" value="C:glutamatergic synapse"/>
    <property type="evidence" value="ECO:0007669"/>
    <property type="project" value="Ensembl"/>
</dbReference>
<dbReference type="GO" id="GO:0005882">
    <property type="term" value="C:intermediate filament"/>
    <property type="evidence" value="ECO:0007669"/>
    <property type="project" value="Ensembl"/>
</dbReference>
<dbReference type="GO" id="GO:0016020">
    <property type="term" value="C:membrane"/>
    <property type="evidence" value="ECO:0000304"/>
    <property type="project" value="ProtInc"/>
</dbReference>
<dbReference type="GO" id="GO:0043025">
    <property type="term" value="C:neuronal cell body"/>
    <property type="evidence" value="ECO:0007669"/>
    <property type="project" value="Ensembl"/>
</dbReference>
<dbReference type="GO" id="GO:0005886">
    <property type="term" value="C:plasma membrane"/>
    <property type="evidence" value="ECO:0000314"/>
    <property type="project" value="UniProtKB"/>
</dbReference>
<dbReference type="GO" id="GO:0045211">
    <property type="term" value="C:postsynaptic membrane"/>
    <property type="evidence" value="ECO:0007669"/>
    <property type="project" value="Ensembl"/>
</dbReference>
<dbReference type="GO" id="GO:0048786">
    <property type="term" value="C:presynaptic active zone"/>
    <property type="evidence" value="ECO:0007669"/>
    <property type="project" value="Ensembl"/>
</dbReference>
<dbReference type="GO" id="GO:0042734">
    <property type="term" value="C:presynaptic membrane"/>
    <property type="evidence" value="ECO:0007669"/>
    <property type="project" value="Ensembl"/>
</dbReference>
<dbReference type="GO" id="GO:0051393">
    <property type="term" value="F:alpha-actinin binding"/>
    <property type="evidence" value="ECO:0007669"/>
    <property type="project" value="Ensembl"/>
</dbReference>
<dbReference type="GO" id="GO:0005516">
    <property type="term" value="F:calmodulin binding"/>
    <property type="evidence" value="ECO:0000314"/>
    <property type="project" value="DisProt"/>
</dbReference>
<dbReference type="GO" id="GO:0019899">
    <property type="term" value="F:enzyme binding"/>
    <property type="evidence" value="ECO:0000353"/>
    <property type="project" value="UniProtKB"/>
</dbReference>
<dbReference type="GO" id="GO:0001609">
    <property type="term" value="F:G protein-coupled adenosine receptor activity"/>
    <property type="evidence" value="ECO:0000314"/>
    <property type="project" value="UniProtKB"/>
</dbReference>
<dbReference type="GO" id="GO:0042802">
    <property type="term" value="F:identical protein binding"/>
    <property type="evidence" value="ECO:0000353"/>
    <property type="project" value="IntAct"/>
</dbReference>
<dbReference type="GO" id="GO:0008289">
    <property type="term" value="F:lipid binding"/>
    <property type="evidence" value="ECO:0000353"/>
    <property type="project" value="DisProt"/>
</dbReference>
<dbReference type="GO" id="GO:0044877">
    <property type="term" value="F:protein-containing complex binding"/>
    <property type="evidence" value="ECO:0007669"/>
    <property type="project" value="Ensembl"/>
</dbReference>
<dbReference type="GO" id="GO:0031802">
    <property type="term" value="F:type 5 metabotropic glutamate receptor binding"/>
    <property type="evidence" value="ECO:0007669"/>
    <property type="project" value="Ensembl"/>
</dbReference>
<dbReference type="GO" id="GO:0007189">
    <property type="term" value="P:adenylate cyclase-activating G protein-coupled receptor signaling pathway"/>
    <property type="evidence" value="ECO:0000314"/>
    <property type="project" value="UniProtKB"/>
</dbReference>
<dbReference type="GO" id="GO:0007188">
    <property type="term" value="P:adenylate cyclase-modulating G protein-coupled receptor signaling pathway"/>
    <property type="evidence" value="ECO:0000304"/>
    <property type="project" value="ProtInc"/>
</dbReference>
<dbReference type="GO" id="GO:0006915">
    <property type="term" value="P:apoptotic process"/>
    <property type="evidence" value="ECO:0000304"/>
    <property type="project" value="ProtInc"/>
</dbReference>
<dbReference type="GO" id="GO:0097190">
    <property type="term" value="P:apoptotic signaling pathway"/>
    <property type="evidence" value="ECO:0007669"/>
    <property type="project" value="Ensembl"/>
</dbReference>
<dbReference type="GO" id="GO:0048143">
    <property type="term" value="P:astrocyte activation"/>
    <property type="evidence" value="ECO:0007669"/>
    <property type="project" value="Ensembl"/>
</dbReference>
<dbReference type="GO" id="GO:0008015">
    <property type="term" value="P:blood circulation"/>
    <property type="evidence" value="ECO:0000304"/>
    <property type="project" value="ProtInc"/>
</dbReference>
<dbReference type="GO" id="GO:0007596">
    <property type="term" value="P:blood coagulation"/>
    <property type="evidence" value="ECO:0000304"/>
    <property type="project" value="ProtInc"/>
</dbReference>
<dbReference type="GO" id="GO:0007267">
    <property type="term" value="P:cell-cell signaling"/>
    <property type="evidence" value="ECO:0000304"/>
    <property type="project" value="ProtInc"/>
</dbReference>
<dbReference type="GO" id="GO:0006968">
    <property type="term" value="P:cellular defense response"/>
    <property type="evidence" value="ECO:0000304"/>
    <property type="project" value="ProtInc"/>
</dbReference>
<dbReference type="GO" id="GO:0007417">
    <property type="term" value="P:central nervous system development"/>
    <property type="evidence" value="ECO:0000304"/>
    <property type="project" value="ProtInc"/>
</dbReference>
<dbReference type="GO" id="GO:0042755">
    <property type="term" value="P:eating behavior"/>
    <property type="evidence" value="ECO:0007669"/>
    <property type="project" value="Ensembl"/>
</dbReference>
<dbReference type="GO" id="GO:0060079">
    <property type="term" value="P:excitatory postsynaptic potential"/>
    <property type="evidence" value="ECO:0007669"/>
    <property type="project" value="Ensembl"/>
</dbReference>
<dbReference type="GO" id="GO:0001973">
    <property type="term" value="P:G protein-coupled adenosine receptor signaling pathway"/>
    <property type="evidence" value="ECO:0000318"/>
    <property type="project" value="GO_Central"/>
</dbReference>
<dbReference type="GO" id="GO:0006954">
    <property type="term" value="P:inflammatory response"/>
    <property type="evidence" value="ECO:0000304"/>
    <property type="project" value="ProtInc"/>
</dbReference>
<dbReference type="GO" id="GO:0060080">
    <property type="term" value="P:inhibitory postsynaptic potential"/>
    <property type="evidence" value="ECO:0007669"/>
    <property type="project" value="Ensembl"/>
</dbReference>
<dbReference type="GO" id="GO:0007626">
    <property type="term" value="P:locomotory behavior"/>
    <property type="evidence" value="ECO:0007669"/>
    <property type="project" value="Ensembl"/>
</dbReference>
<dbReference type="GO" id="GO:0051899">
    <property type="term" value="P:membrane depolarization"/>
    <property type="evidence" value="ECO:0007669"/>
    <property type="project" value="Ensembl"/>
</dbReference>
<dbReference type="GO" id="GO:0046636">
    <property type="term" value="P:negative regulation of alpha-beta T cell activation"/>
    <property type="evidence" value="ECO:0007669"/>
    <property type="project" value="Ensembl"/>
</dbReference>
<dbReference type="GO" id="GO:0008285">
    <property type="term" value="P:negative regulation of cell population proliferation"/>
    <property type="evidence" value="ECO:0007669"/>
    <property type="project" value="Ensembl"/>
</dbReference>
<dbReference type="GO" id="GO:0050728">
    <property type="term" value="P:negative regulation of inflammatory response"/>
    <property type="evidence" value="ECO:0007669"/>
    <property type="project" value="Ensembl"/>
</dbReference>
<dbReference type="GO" id="GO:0043524">
    <property type="term" value="P:negative regulation of neuron apoptotic process"/>
    <property type="evidence" value="ECO:0007669"/>
    <property type="project" value="Ensembl"/>
</dbReference>
<dbReference type="GO" id="GO:0043116">
    <property type="term" value="P:negative regulation of vascular permeability"/>
    <property type="evidence" value="ECO:0007669"/>
    <property type="project" value="Ensembl"/>
</dbReference>
<dbReference type="GO" id="GO:0048812">
    <property type="term" value="P:neuron projection morphogenesis"/>
    <property type="evidence" value="ECO:0007669"/>
    <property type="project" value="Ensembl"/>
</dbReference>
<dbReference type="GO" id="GO:0006909">
    <property type="term" value="P:phagocytosis"/>
    <property type="evidence" value="ECO:0000304"/>
    <property type="project" value="ProtInc"/>
</dbReference>
<dbReference type="GO" id="GO:0007200">
    <property type="term" value="P:phospholipase C-activating G protein-coupled receptor signaling pathway"/>
    <property type="evidence" value="ECO:0007669"/>
    <property type="project" value="Ensembl"/>
</dbReference>
<dbReference type="GO" id="GO:0014057">
    <property type="term" value="P:positive regulation of acetylcholine secretion, neurotransmission"/>
    <property type="evidence" value="ECO:0007669"/>
    <property type="project" value="Ensembl"/>
</dbReference>
<dbReference type="GO" id="GO:2001235">
    <property type="term" value="P:positive regulation of apoptotic signaling pathway"/>
    <property type="evidence" value="ECO:0007669"/>
    <property type="project" value="Ensembl"/>
</dbReference>
<dbReference type="GO" id="GO:0045938">
    <property type="term" value="P:positive regulation of circadian sleep/wake cycle, sleep"/>
    <property type="evidence" value="ECO:0007669"/>
    <property type="project" value="Ensembl"/>
</dbReference>
<dbReference type="GO" id="GO:0070374">
    <property type="term" value="P:positive regulation of ERK1 and ERK2 cascade"/>
    <property type="evidence" value="ECO:0007669"/>
    <property type="project" value="Ensembl"/>
</dbReference>
<dbReference type="GO" id="GO:0014049">
    <property type="term" value="P:positive regulation of glutamate secretion"/>
    <property type="evidence" value="ECO:0007669"/>
    <property type="project" value="Ensembl"/>
</dbReference>
<dbReference type="GO" id="GO:1900273">
    <property type="term" value="P:positive regulation of long-term synaptic potentiation"/>
    <property type="evidence" value="ECO:0007669"/>
    <property type="project" value="Ensembl"/>
</dbReference>
<dbReference type="GO" id="GO:0050714">
    <property type="term" value="P:positive regulation of protein secretion"/>
    <property type="evidence" value="ECO:0007669"/>
    <property type="project" value="Ensembl"/>
</dbReference>
<dbReference type="GO" id="GO:0032230">
    <property type="term" value="P:positive regulation of synaptic transmission, GABAergic"/>
    <property type="evidence" value="ECO:0007669"/>
    <property type="project" value="Ensembl"/>
</dbReference>
<dbReference type="GO" id="GO:0051968">
    <property type="term" value="P:positive regulation of synaptic transmission, glutamatergic"/>
    <property type="evidence" value="ECO:0007669"/>
    <property type="project" value="Ensembl"/>
</dbReference>
<dbReference type="GO" id="GO:0035810">
    <property type="term" value="P:positive regulation of urine volume"/>
    <property type="evidence" value="ECO:0007669"/>
    <property type="project" value="Ensembl"/>
</dbReference>
<dbReference type="GO" id="GO:0060134">
    <property type="term" value="P:prepulse inhibition"/>
    <property type="evidence" value="ECO:0007669"/>
    <property type="project" value="Ensembl"/>
</dbReference>
<dbReference type="GO" id="GO:0099171">
    <property type="term" value="P:presynaptic modulation of chemical synaptic transmission"/>
    <property type="evidence" value="ECO:0007669"/>
    <property type="project" value="Ensembl"/>
</dbReference>
<dbReference type="GO" id="GO:0051924">
    <property type="term" value="P:regulation of calcium ion transport"/>
    <property type="evidence" value="ECO:0007669"/>
    <property type="project" value="Ensembl"/>
</dbReference>
<dbReference type="GO" id="GO:0006355">
    <property type="term" value="P:regulation of DNA-templated transcription"/>
    <property type="evidence" value="ECO:0007669"/>
    <property type="project" value="Ensembl"/>
</dbReference>
<dbReference type="GO" id="GO:0051881">
    <property type="term" value="P:regulation of mitochondrial membrane potential"/>
    <property type="evidence" value="ECO:0007669"/>
    <property type="project" value="Ensembl"/>
</dbReference>
<dbReference type="GO" id="GO:0014061">
    <property type="term" value="P:regulation of norepinephrine secretion"/>
    <property type="evidence" value="ECO:0007669"/>
    <property type="project" value="Ensembl"/>
</dbReference>
<dbReference type="GO" id="GO:0001975">
    <property type="term" value="P:response to amphetamine"/>
    <property type="evidence" value="ECO:0007669"/>
    <property type="project" value="Ensembl"/>
</dbReference>
<dbReference type="GO" id="GO:0031000">
    <property type="term" value="P:response to caffeine"/>
    <property type="evidence" value="ECO:0007669"/>
    <property type="project" value="Ensembl"/>
</dbReference>
<dbReference type="GO" id="GO:0014074">
    <property type="term" value="P:response to purine-containing compound"/>
    <property type="evidence" value="ECO:0000314"/>
    <property type="project" value="MGI"/>
</dbReference>
<dbReference type="GO" id="GO:0009410">
    <property type="term" value="P:response to xenobiotic stimulus"/>
    <property type="evidence" value="ECO:0007669"/>
    <property type="project" value="Ensembl"/>
</dbReference>
<dbReference type="GO" id="GO:0007600">
    <property type="term" value="P:sensory perception"/>
    <property type="evidence" value="ECO:0000304"/>
    <property type="project" value="ProtInc"/>
</dbReference>
<dbReference type="GO" id="GO:0007271">
    <property type="term" value="P:synaptic transmission, cholinergic"/>
    <property type="evidence" value="ECO:0007669"/>
    <property type="project" value="Ensembl"/>
</dbReference>
<dbReference type="GO" id="GO:0001963">
    <property type="term" value="P:synaptic transmission, dopaminergic"/>
    <property type="evidence" value="ECO:0007669"/>
    <property type="project" value="Ensembl"/>
</dbReference>
<dbReference type="GO" id="GO:0035249">
    <property type="term" value="P:synaptic transmission, glutamatergic"/>
    <property type="evidence" value="ECO:0007669"/>
    <property type="project" value="Ensembl"/>
</dbReference>
<dbReference type="GO" id="GO:0042311">
    <property type="term" value="P:vasodilation"/>
    <property type="evidence" value="ECO:0007669"/>
    <property type="project" value="Ensembl"/>
</dbReference>
<dbReference type="CDD" id="cd15068">
    <property type="entry name" value="7tmA_Adenosine_R_A2A"/>
    <property type="match status" value="1"/>
</dbReference>
<dbReference type="DisProt" id="DP01547"/>
<dbReference type="FunFam" id="1.20.1070.10:FF:000061">
    <property type="entry name" value="Adenosine receptor A2"/>
    <property type="match status" value="1"/>
</dbReference>
<dbReference type="Gene3D" id="1.20.1070.10">
    <property type="entry name" value="Rhodopsin 7-helix transmembrane proteins"/>
    <property type="match status" value="1"/>
</dbReference>
<dbReference type="InterPro" id="IPR001513">
    <property type="entry name" value="Adeno_A2A_rcpt"/>
</dbReference>
<dbReference type="InterPro" id="IPR001634">
    <property type="entry name" value="Adenosn_rcpt"/>
</dbReference>
<dbReference type="InterPro" id="IPR000276">
    <property type="entry name" value="GPCR_Rhodpsn"/>
</dbReference>
<dbReference type="InterPro" id="IPR017452">
    <property type="entry name" value="GPCR_Rhodpsn_7TM"/>
</dbReference>
<dbReference type="PANTHER" id="PTHR24246:SF47">
    <property type="entry name" value="ADENOSINE RECEPTOR A2A"/>
    <property type="match status" value="1"/>
</dbReference>
<dbReference type="PANTHER" id="PTHR24246">
    <property type="entry name" value="OLFACTORY RECEPTOR AND ADENOSINE RECEPTOR"/>
    <property type="match status" value="1"/>
</dbReference>
<dbReference type="Pfam" id="PF00001">
    <property type="entry name" value="7tm_1"/>
    <property type="match status" value="1"/>
</dbReference>
<dbReference type="PRINTS" id="PR00553">
    <property type="entry name" value="ADENOSINA2AR"/>
</dbReference>
<dbReference type="PRINTS" id="PR00424">
    <property type="entry name" value="ADENOSINER"/>
</dbReference>
<dbReference type="PRINTS" id="PR00237">
    <property type="entry name" value="GPCRRHODOPSN"/>
</dbReference>
<dbReference type="SMART" id="SM01381">
    <property type="entry name" value="7TM_GPCR_Srsx"/>
    <property type="match status" value="1"/>
</dbReference>
<dbReference type="SUPFAM" id="SSF81321">
    <property type="entry name" value="Family A G protein-coupled receptor-like"/>
    <property type="match status" value="1"/>
</dbReference>
<dbReference type="PROSITE" id="PS00237">
    <property type="entry name" value="G_PROTEIN_RECEP_F1_1"/>
    <property type="match status" value="1"/>
</dbReference>
<dbReference type="PROSITE" id="PS50262">
    <property type="entry name" value="G_PROTEIN_RECEP_F1_2"/>
    <property type="match status" value="1"/>
</dbReference>
<reference key="1">
    <citation type="submission" date="1992-07" db="EMBL/GenBank/DDBJ databases">
        <authorList>
            <person name="Tiffany H.L."/>
            <person name="Murphy P.M."/>
        </authorList>
    </citation>
    <scope>NUCLEOTIDE SEQUENCE [MRNA]</scope>
</reference>
<reference key="2">
    <citation type="submission" date="1992-09" db="EMBL/GenBank/DDBJ databases">
        <authorList>
            <person name="Salvatore C.A."/>
            <person name="Luneau C.J."/>
            <person name="Johnson R.G."/>
            <person name="Jacobson M."/>
        </authorList>
    </citation>
    <scope>NUCLEOTIDE SEQUENCE [MRNA]</scope>
    <source>
        <tissue>Brain</tissue>
    </source>
</reference>
<reference key="3">
    <citation type="journal article" date="1992" name="Brain Res. Mol. Brain Res.">
        <title>Molecular characterization of a human brain adenosine A2 receptor.</title>
        <authorList>
            <person name="Furlong T.J."/>
            <person name="Pierce K.D."/>
            <person name="Selbie L.A."/>
            <person name="Shine J."/>
        </authorList>
    </citation>
    <scope>NUCLEOTIDE SEQUENCE [MRNA]</scope>
    <source>
        <tissue>Hippocampus</tissue>
    </source>
</reference>
<reference key="4">
    <citation type="journal article" date="1996" name="Biochem. Biophys. Res. Commun.">
        <title>Characterization and chromosomal localization of the human A2a adenosine receptor gene: ADORA2A.</title>
        <authorList>
            <person name="Le F."/>
            <person name="Townsend-Nicholson A."/>
            <person name="Baker E."/>
            <person name="Sutherland G.R."/>
            <person name="Schofield P.R."/>
        </authorList>
    </citation>
    <scope>NUCLEOTIDE SEQUENCE [GENOMIC DNA]</scope>
</reference>
<reference key="5">
    <citation type="submission" date="2002-07" db="EMBL/GenBank/DDBJ databases">
        <title>cDNA clones of human proteins involved in signal transduction sequenced by the Guthrie cDNA resource center (www.cdna.org).</title>
        <authorList>
            <person name="Puhl H.L. III"/>
            <person name="Ikeda S.R."/>
            <person name="Aronstam R.S."/>
        </authorList>
    </citation>
    <scope>NUCLEOTIDE SEQUENCE [LARGE SCALE MRNA]</scope>
</reference>
<reference key="6">
    <citation type="journal article" date="2004" name="Genome Biol.">
        <title>A genome annotation-driven approach to cloning the human ORFeome.</title>
        <authorList>
            <person name="Collins J.E."/>
            <person name="Wright C.L."/>
            <person name="Edwards C.A."/>
            <person name="Davis M.P."/>
            <person name="Grinham J.A."/>
            <person name="Cole C.G."/>
            <person name="Goward M.E."/>
            <person name="Aguado B."/>
            <person name="Mallya M."/>
            <person name="Mokrab Y."/>
            <person name="Huckle E.J."/>
            <person name="Beare D.M."/>
            <person name="Dunham I."/>
        </authorList>
    </citation>
    <scope>NUCLEOTIDE SEQUENCE [LARGE SCALE MRNA]</scope>
</reference>
<reference key="7">
    <citation type="submission" date="2003-05" db="EMBL/GenBank/DDBJ databases">
        <title>Cloning of human full-length CDSs in BD Creator(TM) system donor vector.</title>
        <authorList>
            <person name="Kalnine N."/>
            <person name="Chen X."/>
            <person name="Rolfs A."/>
            <person name="Halleck A."/>
            <person name="Hines L."/>
            <person name="Eisenstein S."/>
            <person name="Koundinya M."/>
            <person name="Raphael J."/>
            <person name="Moreira D."/>
            <person name="Kelley T."/>
            <person name="LaBaer J."/>
            <person name="Lin Y."/>
            <person name="Phelan M."/>
            <person name="Farmer A."/>
        </authorList>
    </citation>
    <scope>NUCLEOTIDE SEQUENCE [LARGE SCALE MRNA]</scope>
</reference>
<reference key="8">
    <citation type="journal article" date="2004" name="Nat. Genet.">
        <title>Complete sequencing and characterization of 21,243 full-length human cDNAs.</title>
        <authorList>
            <person name="Ota T."/>
            <person name="Suzuki Y."/>
            <person name="Nishikawa T."/>
            <person name="Otsuki T."/>
            <person name="Sugiyama T."/>
            <person name="Irie R."/>
            <person name="Wakamatsu A."/>
            <person name="Hayashi K."/>
            <person name="Sato H."/>
            <person name="Nagai K."/>
            <person name="Kimura K."/>
            <person name="Makita H."/>
            <person name="Sekine M."/>
            <person name="Obayashi M."/>
            <person name="Nishi T."/>
            <person name="Shibahara T."/>
            <person name="Tanaka T."/>
            <person name="Ishii S."/>
            <person name="Yamamoto J."/>
            <person name="Saito K."/>
            <person name="Kawai Y."/>
            <person name="Isono Y."/>
            <person name="Nakamura Y."/>
            <person name="Nagahari K."/>
            <person name="Murakami K."/>
            <person name="Yasuda T."/>
            <person name="Iwayanagi T."/>
            <person name="Wagatsuma M."/>
            <person name="Shiratori A."/>
            <person name="Sudo H."/>
            <person name="Hosoiri T."/>
            <person name="Kaku Y."/>
            <person name="Kodaira H."/>
            <person name="Kondo H."/>
            <person name="Sugawara M."/>
            <person name="Takahashi M."/>
            <person name="Kanda K."/>
            <person name="Yokoi T."/>
            <person name="Furuya T."/>
            <person name="Kikkawa E."/>
            <person name="Omura Y."/>
            <person name="Abe K."/>
            <person name="Kamihara K."/>
            <person name="Katsuta N."/>
            <person name="Sato K."/>
            <person name="Tanikawa M."/>
            <person name="Yamazaki M."/>
            <person name="Ninomiya K."/>
            <person name="Ishibashi T."/>
            <person name="Yamashita H."/>
            <person name="Murakawa K."/>
            <person name="Fujimori K."/>
            <person name="Tanai H."/>
            <person name="Kimata M."/>
            <person name="Watanabe M."/>
            <person name="Hiraoka S."/>
            <person name="Chiba Y."/>
            <person name="Ishida S."/>
            <person name="Ono Y."/>
            <person name="Takiguchi S."/>
            <person name="Watanabe S."/>
            <person name="Yosida M."/>
            <person name="Hotuta T."/>
            <person name="Kusano J."/>
            <person name="Kanehori K."/>
            <person name="Takahashi-Fujii A."/>
            <person name="Hara H."/>
            <person name="Tanase T.-O."/>
            <person name="Nomura Y."/>
            <person name="Togiya S."/>
            <person name="Komai F."/>
            <person name="Hara R."/>
            <person name="Takeuchi K."/>
            <person name="Arita M."/>
            <person name="Imose N."/>
            <person name="Musashino K."/>
            <person name="Yuuki H."/>
            <person name="Oshima A."/>
            <person name="Sasaki N."/>
            <person name="Aotsuka S."/>
            <person name="Yoshikawa Y."/>
            <person name="Matsunawa H."/>
            <person name="Ichihara T."/>
            <person name="Shiohata N."/>
            <person name="Sano S."/>
            <person name="Moriya S."/>
            <person name="Momiyama H."/>
            <person name="Satoh N."/>
            <person name="Takami S."/>
            <person name="Terashima Y."/>
            <person name="Suzuki O."/>
            <person name="Nakagawa S."/>
            <person name="Senoh A."/>
            <person name="Mizoguchi H."/>
            <person name="Goto Y."/>
            <person name="Shimizu F."/>
            <person name="Wakebe H."/>
            <person name="Hishigaki H."/>
            <person name="Watanabe T."/>
            <person name="Sugiyama A."/>
            <person name="Takemoto M."/>
            <person name="Kawakami B."/>
            <person name="Yamazaki M."/>
            <person name="Watanabe K."/>
            <person name="Kumagai A."/>
            <person name="Itakura S."/>
            <person name="Fukuzumi Y."/>
            <person name="Fujimori Y."/>
            <person name="Komiyama M."/>
            <person name="Tashiro H."/>
            <person name="Tanigami A."/>
            <person name="Fujiwara T."/>
            <person name="Ono T."/>
            <person name="Yamada K."/>
            <person name="Fujii Y."/>
            <person name="Ozaki K."/>
            <person name="Hirao M."/>
            <person name="Ohmori Y."/>
            <person name="Kawabata A."/>
            <person name="Hikiji T."/>
            <person name="Kobatake N."/>
            <person name="Inagaki H."/>
            <person name="Ikema Y."/>
            <person name="Okamoto S."/>
            <person name="Okitani R."/>
            <person name="Kawakami T."/>
            <person name="Noguchi S."/>
            <person name="Itoh T."/>
            <person name="Shigeta K."/>
            <person name="Senba T."/>
            <person name="Matsumura K."/>
            <person name="Nakajima Y."/>
            <person name="Mizuno T."/>
            <person name="Morinaga M."/>
            <person name="Sasaki M."/>
            <person name="Togashi T."/>
            <person name="Oyama M."/>
            <person name="Hata H."/>
            <person name="Watanabe M."/>
            <person name="Komatsu T."/>
            <person name="Mizushima-Sugano J."/>
            <person name="Satoh T."/>
            <person name="Shirai Y."/>
            <person name="Takahashi Y."/>
            <person name="Nakagawa K."/>
            <person name="Okumura K."/>
            <person name="Nagase T."/>
            <person name="Nomura N."/>
            <person name="Kikuchi H."/>
            <person name="Masuho Y."/>
            <person name="Yamashita R."/>
            <person name="Nakai K."/>
            <person name="Yada T."/>
            <person name="Nakamura Y."/>
            <person name="Ohara O."/>
            <person name="Isogai T."/>
            <person name="Sugano S."/>
        </authorList>
    </citation>
    <scope>NUCLEOTIDE SEQUENCE [LARGE SCALE MRNA]</scope>
    <source>
        <tissue>Thymus</tissue>
    </source>
</reference>
<reference key="9">
    <citation type="submission" date="2005-07" db="EMBL/GenBank/DDBJ databases">
        <authorList>
            <person name="Mural R.J."/>
            <person name="Istrail S."/>
            <person name="Sutton G.G."/>
            <person name="Florea L."/>
            <person name="Halpern A.L."/>
            <person name="Mobarry C.M."/>
            <person name="Lippert R."/>
            <person name="Walenz B."/>
            <person name="Shatkay H."/>
            <person name="Dew I."/>
            <person name="Miller J.R."/>
            <person name="Flanigan M.J."/>
            <person name="Edwards N.J."/>
            <person name="Bolanos R."/>
            <person name="Fasulo D."/>
            <person name="Halldorsson B.V."/>
            <person name="Hannenhalli S."/>
            <person name="Turner R."/>
            <person name="Yooseph S."/>
            <person name="Lu F."/>
            <person name="Nusskern D.R."/>
            <person name="Shue B.C."/>
            <person name="Zheng X.H."/>
            <person name="Zhong F."/>
            <person name="Delcher A.L."/>
            <person name="Huson D.H."/>
            <person name="Kravitz S.A."/>
            <person name="Mouchard L."/>
            <person name="Reinert K."/>
            <person name="Remington K.A."/>
            <person name="Clark A.G."/>
            <person name="Waterman M.S."/>
            <person name="Eichler E.E."/>
            <person name="Adams M.D."/>
            <person name="Hunkapiller M.W."/>
            <person name="Myers E.W."/>
            <person name="Venter J.C."/>
        </authorList>
    </citation>
    <scope>NUCLEOTIDE SEQUENCE [LARGE SCALE GENOMIC DNA]</scope>
</reference>
<reference key="10">
    <citation type="journal article" date="2004" name="Genome Res.">
        <title>The status, quality, and expansion of the NIH full-length cDNA project: the Mammalian Gene Collection (MGC).</title>
        <authorList>
            <consortium name="The MGC Project Team"/>
        </authorList>
    </citation>
    <scope>NUCLEOTIDE SEQUENCE [LARGE SCALE MRNA]</scope>
    <source>
        <tissue>Lymph</tissue>
    </source>
</reference>
<reference key="11">
    <citation type="journal article" date="2007" name="Mol. Cell. Neurosci.">
        <title>The neuronal Ca(2+) -binding protein 2 (NECAB2) interacts with the adenosine A(2A) receptor and modulates the cell surface expression and function of the receptor.</title>
        <authorList>
            <person name="Canela L."/>
            <person name="Lujan R."/>
            <person name="Lluis C."/>
            <person name="Burgueno J."/>
            <person name="Mallol J."/>
            <person name="Canela E.I."/>
            <person name="Franco R."/>
            <person name="Ciruela F."/>
        </authorList>
    </citation>
    <scope>INTERACTION WITH NECAB2</scope>
</reference>
<reference key="12">
    <citation type="journal article" date="2010" name="J. Recept. Signal Transduct.">
        <title>The dopamine D(4) receptor, the ultimate disordered protein.</title>
        <authorList>
            <person name="Woods A.S."/>
        </authorList>
    </citation>
    <scope>POSSIBLE INTERACTION WITH DRD4</scope>
</reference>
<reference key="13">
    <citation type="journal article" date="1995" name="J. Biol. Chem.">
        <title>Site-directed mutagenesis identifies residues involved in ligand recognition in the human A2a adenosine receptor.</title>
        <authorList>
            <person name="Kim J."/>
            <person name="Wess J."/>
            <person name="van Rhee A.M."/>
            <person name="Schoneberg T."/>
            <person name="Jacobson K.A."/>
        </authorList>
    </citation>
    <scope>3D-STRUCTURE MODELING OF TRANSMEMBRANE DOMAINS</scope>
</reference>
<reference key="14">
    <citation type="journal article" date="2006" name="Mol. Pharmacol.">
        <title>The ubiquitin-specific protease Usp4 regulates the cell surface level of the A2A receptor.</title>
        <authorList>
            <person name="Milojevic T."/>
            <person name="Reiterer V."/>
            <person name="Stefan E."/>
            <person name="Korkhov V.M."/>
            <person name="Dorostkar M.M."/>
            <person name="Ducza E."/>
            <person name="Ogris E."/>
            <person name="Boehm S."/>
            <person name="Freissmuth M."/>
            <person name="Nanoff C."/>
        </authorList>
    </citation>
    <scope>INTERACTION WITH USP4</scope>
    <scope>UBIQUITINATION</scope>
    <scope>DEUBIQUITINATION BY USP4</scope>
</reference>
<reference key="15">
    <citation type="journal article" date="2008" name="Science">
        <title>The 2.6 angstrom crystal structure of a human A2A adenosine receptor bound to an antagonist.</title>
        <authorList>
            <person name="Jaakola V.-P."/>
            <person name="Griffith M.T."/>
            <person name="Hanson M.A."/>
            <person name="Cherezov V."/>
            <person name="Chien E.Y.T."/>
            <person name="Lane J.R."/>
            <person name="Ijzerman A.P."/>
            <person name="Stevens R.C."/>
        </authorList>
    </citation>
    <scope>X-RAY CRYSTALLOGRAPHY (2.60 ANGSTROMS) OF 2-316 IN COMPLEX WITH ANTAGONIST</scope>
    <scope>TOPOLOGY</scope>
    <scope>DISULFIDE BONDS</scope>
</reference>
<reference evidence="12 13" key="16">
    <citation type="journal article" date="2011" name="Nature">
        <title>Agonist-bound adenosine A2A receptor structures reveal common features of GPCR activation.</title>
        <authorList>
            <person name="Lebon G."/>
            <person name="Warne T."/>
            <person name="Edwards P.C."/>
            <person name="Bennett K."/>
            <person name="Langmead C.J."/>
            <person name="Leslie A.G."/>
            <person name="Tate C.G."/>
        </authorList>
    </citation>
    <scope>X-RAY CRYSTALLOGRAPHY (2.60 ANGSTROMS) OF 1-317 IN COMPLEXES WITH ENDOGENOUS AGONIST ADENOSINE AND SYNTHETIC AGONIST NECA</scope>
</reference>
<reference key="17">
    <citation type="journal article" date="1999" name="Nat. Genet.">
        <title>Characterization of single-nucleotide polymorphisms in coding regions of human genes.</title>
        <authorList>
            <person name="Cargill M."/>
            <person name="Altshuler D."/>
            <person name="Ireland J."/>
            <person name="Sklar P."/>
            <person name="Ardlie K."/>
            <person name="Patil N."/>
            <person name="Shaw N."/>
            <person name="Lane C.R."/>
            <person name="Lim E.P."/>
            <person name="Kalyanaraman N."/>
            <person name="Nemesh J."/>
            <person name="Ziaugra L."/>
            <person name="Friedland L."/>
            <person name="Rolfe A."/>
            <person name="Warrington J."/>
            <person name="Lipshutz R."/>
            <person name="Daley G.Q."/>
            <person name="Lander E.S."/>
        </authorList>
    </citation>
    <scope>VARIANT VAL-50</scope>
</reference>
<reference key="18">
    <citation type="journal article" date="1999" name="Nat. Genet.">
        <authorList>
            <person name="Cargill M."/>
            <person name="Altshuler D."/>
            <person name="Ireland J."/>
            <person name="Sklar P."/>
            <person name="Ardlie K."/>
            <person name="Patil N."/>
            <person name="Shaw N."/>
            <person name="Lane C.R."/>
            <person name="Lim E.P."/>
            <person name="Kalyanaraman N."/>
            <person name="Nemesh J."/>
            <person name="Ziaugra L."/>
            <person name="Friedland L."/>
            <person name="Rolfe A."/>
            <person name="Warrington J."/>
            <person name="Lipshutz R."/>
            <person name="Daley G.Q."/>
            <person name="Lander E.S."/>
        </authorList>
    </citation>
    <scope>ERRATUM OF PUBMED:10391209</scope>
</reference>
<sequence length="412" mass="44707">MPIMGSSVYITVELAIAVLAILGNVLVCWAVWLNSNLQNVTNYFVVSLAAADIAVGVLAIPFAITISTGFCAACHGCLFIACFVLVLTQSSIFSLLAIAIDRYIAIRIPLRYNGLVTGTRAKGIIAICWVLSFAIGLTPMLGWNNCGQPKEGKNHSQGCGEGQVACLFEDVVPMNYMVYFNFFACVLVPLLLMLGVYLRIFLAARRQLKQMESQPLPGERARSTLQKEVHAAKSLAIIVGLFALCWLPLHIINCFTFFCPDCSHAPLWLMYLAIVLSHTNSVVNPFIYAYRIREFRQTFRKIIRSHVLRQQEPFKAAGTSARVLAAHGSDGEQVSLRLNGHPPGVWANGSAPHPERRPNGYALGLVSGGSAQESQGNTGLPDVELLSHELKGVCPEPPGLDDPLAQDGAGVS</sequence>
<feature type="chain" id="PRO_0000068999" description="Adenosine receptor A2a">
    <location>
        <begin position="1"/>
        <end position="412"/>
    </location>
</feature>
<feature type="topological domain" description="Extracellular" evidence="9">
    <location>
        <begin position="1"/>
        <end position="7"/>
    </location>
</feature>
<feature type="transmembrane region" description="Helical; Name=1">
    <location>
        <begin position="8"/>
        <end position="32"/>
    </location>
</feature>
<feature type="topological domain" description="Cytoplasmic" evidence="9">
    <location>
        <begin position="33"/>
        <end position="42"/>
    </location>
</feature>
<feature type="transmembrane region" description="Helical; Name=2">
    <location>
        <begin position="43"/>
        <end position="66"/>
    </location>
</feature>
<feature type="topological domain" description="Extracellular" evidence="9">
    <location>
        <begin position="67"/>
        <end position="77"/>
    </location>
</feature>
<feature type="transmembrane region" description="Helical; Name=3">
    <location>
        <begin position="78"/>
        <end position="100"/>
    </location>
</feature>
<feature type="topological domain" description="Cytoplasmic" evidence="9">
    <location>
        <begin position="101"/>
        <end position="120"/>
    </location>
</feature>
<feature type="transmembrane region" description="Helical; Name=4">
    <location>
        <begin position="121"/>
        <end position="143"/>
    </location>
</feature>
<feature type="topological domain" description="Extracellular" evidence="9">
    <location>
        <begin position="144"/>
        <end position="173"/>
    </location>
</feature>
<feature type="transmembrane region" description="Helical; Name=5">
    <location>
        <begin position="174"/>
        <end position="198"/>
    </location>
</feature>
<feature type="topological domain" description="Cytoplasmic" evidence="9">
    <location>
        <begin position="199"/>
        <end position="234"/>
    </location>
</feature>
<feature type="transmembrane region" description="Helical; Name=6">
    <location>
        <begin position="235"/>
        <end position="258"/>
    </location>
</feature>
<feature type="topological domain" description="Extracellular" evidence="9">
    <location>
        <begin position="259"/>
        <end position="266"/>
    </location>
</feature>
<feature type="transmembrane region" description="Helical; Name=7">
    <location>
        <begin position="267"/>
        <end position="290"/>
    </location>
</feature>
<feature type="topological domain" description="Cytoplasmic" evidence="9">
    <location>
        <begin position="291"/>
        <end position="412"/>
    </location>
</feature>
<feature type="region of interest" description="Disordered" evidence="5">
    <location>
        <begin position="391"/>
        <end position="412"/>
    </location>
</feature>
<feature type="binding site" evidence="10 12">
    <location>
        <position position="169"/>
    </location>
    <ligand>
        <name>adenosine</name>
        <dbReference type="ChEBI" id="CHEBI:16335"/>
        <note>agonist</note>
    </ligand>
</feature>
<feature type="binding site" evidence="10 12">
    <location>
        <position position="253"/>
    </location>
    <ligand>
        <name>adenosine</name>
        <dbReference type="ChEBI" id="CHEBI:16335"/>
        <note>agonist</note>
    </ligand>
</feature>
<feature type="binding site" evidence="10 12">
    <location>
        <position position="277"/>
    </location>
    <ligand>
        <name>adenosine</name>
        <dbReference type="ChEBI" id="CHEBI:16335"/>
        <note>agonist</note>
    </ligand>
</feature>
<feature type="binding site" evidence="10 12">
    <location>
        <position position="278"/>
    </location>
    <ligand>
        <name>adenosine</name>
        <dbReference type="ChEBI" id="CHEBI:16335"/>
        <note>agonist</note>
    </ligand>
</feature>
<feature type="glycosylation site" description="N-linked (GlcNAc...) asparagine" evidence="3">
    <location>
        <position position="154"/>
    </location>
</feature>
<feature type="disulfide bond" evidence="4 9">
    <location>
        <begin position="71"/>
        <end position="159"/>
    </location>
</feature>
<feature type="disulfide bond" evidence="4 9">
    <location>
        <begin position="74"/>
        <end position="146"/>
    </location>
</feature>
<feature type="disulfide bond" evidence="4 9">
    <location>
        <begin position="77"/>
        <end position="166"/>
    </location>
</feature>
<feature type="disulfide bond" evidence="4 9">
    <location>
        <begin position="259"/>
        <end position="262"/>
    </location>
</feature>
<feature type="sequence variant" id="VAR_011835" description="In dbSNP:rs4530." evidence="6">
    <original>A</original>
    <variation>V</variation>
    <location>
        <position position="50"/>
    </location>
</feature>
<feature type="sequence variant" id="VAR_011836" description="In dbSNP:rs4990.">
    <original>R</original>
    <variation>H</variation>
    <location>
        <position position="300"/>
    </location>
</feature>
<feature type="sequence variant" id="VAR_003451" description="In dbSNP:rs1277013918.">
    <original>G</original>
    <variation>R</variation>
    <location>
        <position position="392"/>
    </location>
</feature>
<feature type="helix" evidence="17">
    <location>
        <begin position="2"/>
        <end position="33"/>
    </location>
</feature>
<feature type="helix" evidence="17">
    <location>
        <begin position="35"/>
        <end position="37"/>
    </location>
</feature>
<feature type="helix" evidence="17">
    <location>
        <begin position="40"/>
        <end position="57"/>
    </location>
</feature>
<feature type="helix" evidence="17">
    <location>
        <begin position="59"/>
        <end position="67"/>
    </location>
</feature>
<feature type="strand" evidence="17">
    <location>
        <begin position="71"/>
        <end position="73"/>
    </location>
</feature>
<feature type="helix" evidence="17">
    <location>
        <begin position="74"/>
        <end position="107"/>
    </location>
</feature>
<feature type="helix" evidence="17">
    <location>
        <begin position="109"/>
        <end position="115"/>
    </location>
</feature>
<feature type="helix" evidence="17">
    <location>
        <begin position="118"/>
        <end position="136"/>
    </location>
</feature>
<feature type="helix" evidence="17">
    <location>
        <begin position="138"/>
        <end position="141"/>
    </location>
</feature>
<feature type="strand" evidence="18">
    <location>
        <begin position="144"/>
        <end position="146"/>
    </location>
</feature>
<feature type="helix" evidence="17">
    <location>
        <begin position="151"/>
        <end position="157"/>
    </location>
</feature>
<feature type="strand" evidence="19">
    <location>
        <begin position="158"/>
        <end position="160"/>
    </location>
</feature>
<feature type="strand" evidence="17">
    <location>
        <begin position="163"/>
        <end position="165"/>
    </location>
</feature>
<feature type="helix" evidence="17">
    <location>
        <begin position="168"/>
        <end position="171"/>
    </location>
</feature>
<feature type="helix" evidence="17">
    <location>
        <begin position="174"/>
        <end position="179"/>
    </location>
</feature>
<feature type="helix" evidence="17">
    <location>
        <begin position="182"/>
        <end position="185"/>
    </location>
</feature>
<feature type="helix" evidence="17">
    <location>
        <begin position="187"/>
        <end position="208"/>
    </location>
</feature>
<feature type="strand" evidence="16">
    <location>
        <begin position="213"/>
        <end position="216"/>
    </location>
</feature>
<feature type="helix" evidence="17">
    <location>
        <begin position="219"/>
        <end position="258"/>
    </location>
</feature>
<feature type="strand" evidence="14">
    <location>
        <begin position="260"/>
        <end position="262"/>
    </location>
</feature>
<feature type="helix" evidence="17">
    <location>
        <begin position="267"/>
        <end position="291"/>
    </location>
</feature>
<feature type="helix" evidence="17">
    <location>
        <begin position="293"/>
        <end position="303"/>
    </location>
</feature>
<feature type="turn" evidence="15">
    <location>
        <begin position="304"/>
        <end position="307"/>
    </location>
</feature>
<feature type="turn" evidence="14">
    <location>
        <begin position="308"/>
        <end position="310"/>
    </location>
</feature>
<feature type="helix" evidence="14">
    <location>
        <begin position="312"/>
        <end position="317"/>
    </location>
</feature>
<keyword id="KW-0002">3D-structure</keyword>
<keyword id="KW-1003">Cell membrane</keyword>
<keyword id="KW-1015">Disulfide bond</keyword>
<keyword id="KW-0297">G-protein coupled receptor</keyword>
<keyword id="KW-0325">Glycoprotein</keyword>
<keyword id="KW-0472">Membrane</keyword>
<keyword id="KW-1267">Proteomics identification</keyword>
<keyword id="KW-0675">Receptor</keyword>
<keyword id="KW-1185">Reference proteome</keyword>
<keyword id="KW-0807">Transducer</keyword>
<keyword id="KW-0812">Transmembrane</keyword>
<keyword id="KW-1133">Transmembrane helix</keyword>
<keyword id="KW-0832">Ubl conjugation</keyword>
<proteinExistence type="evidence at protein level"/>
<name>AA2AR_HUMAN</name>
<protein>
    <recommendedName>
        <fullName>Adenosine receptor A2a</fullName>
    </recommendedName>
</protein>
<comment type="function">
    <text evidence="1">Receptor for adenosine (By similarity). The activity of this receptor is mediated by G proteins which activate adenylyl cyclase (By similarity).</text>
</comment>
<comment type="subunit">
    <text evidence="2 7 8 9">Interacts (via cytoplasmic C-terminal domain) with USP4; the interaction is direct (PubMed:16339847). May interact with DRD4 (PubMed:18832607). Interacts with NECAB2 (PubMed:17689978). Interacts (via cytoplasmic C-terminal domain) with GAS2L2; interaction enhances receptor-mediated adenylyl cyclase activity (By similarity).</text>
</comment>
<comment type="interaction">
    <interactant intactId="EBI-2902702">
        <id>P29274</id>
    </interactant>
    <interactant intactId="EBI-2903663">
        <id>P30542</id>
        <label>ADORA1</label>
    </interactant>
    <organismsDiffer>false</organismsDiffer>
    <experiments>4</experiments>
</comment>
<comment type="interaction">
    <interactant intactId="EBI-2902702">
        <id>P29274</id>
    </interactant>
    <interactant intactId="EBI-2902702">
        <id>P29274</id>
        <label>ADORA2A</label>
    </interactant>
    <organismsDiffer>false</organismsDiffer>
    <experiments>8</experiments>
</comment>
<comment type="interaction">
    <interactant intactId="EBI-2902702">
        <id>P29274</id>
    </interactant>
    <interactant intactId="EBI-3904751">
        <id>P29275</id>
        <label>ADORA2B</label>
    </interactant>
    <organismsDiffer>false</organismsDiffer>
    <experiments>5</experiments>
</comment>
<comment type="interaction">
    <interactant intactId="EBI-2902702">
        <id>P29274</id>
    </interactant>
    <interactant intactId="EBI-749204">
        <id>O15155</id>
        <label>BET1</label>
    </interactant>
    <organismsDiffer>false</organismsDiffer>
    <experiments>3</experiments>
</comment>
<comment type="interaction">
    <interactant intactId="EBI-2902702">
        <id>P29274</id>
    </interactant>
    <interactant intactId="EBI-2909859">
        <id>P21554</id>
        <label>CNR1</label>
    </interactant>
    <organismsDiffer>false</organismsDiffer>
    <experiments>8</experiments>
</comment>
<comment type="interaction">
    <interactant intactId="EBI-2902702">
        <id>P29274</id>
    </interactant>
    <interactant intactId="EBI-448974">
        <id>Q99418</id>
        <label>CYTH2</label>
    </interactant>
    <organismsDiffer>false</organismsDiffer>
    <experiments>6</experiments>
</comment>
<comment type="interaction">
    <interactant intactId="EBI-2902702">
        <id>P29274</id>
    </interactant>
    <interactant intactId="EBI-15639515">
        <id>O15354</id>
        <label>GPR37</label>
    </interactant>
    <organismsDiffer>false</organismsDiffer>
    <experiments>3</experiments>
</comment>
<comment type="interaction">
    <interactant intactId="EBI-2902702">
        <id>P29274</id>
    </interactant>
    <interactant intactId="EBI-950070">
        <id>Q7Z6G3</id>
        <label>NECAB2</label>
    </interactant>
    <organismsDiffer>false</organismsDiffer>
    <experiments>6</experiments>
</comment>
<comment type="interaction">
    <interactant intactId="EBI-2902702">
        <id>P29274</id>
    </interactant>
    <interactant intactId="EBI-12187159">
        <id>O43759-2</id>
        <label>SYNGR1</label>
    </interactant>
    <organismsDiffer>false</organismsDiffer>
    <experiments>3</experiments>
</comment>
<comment type="interaction">
    <interactant intactId="EBI-2902702">
        <id>P29274</id>
    </interactant>
    <interactant intactId="EBI-723290">
        <id>Q13107</id>
        <label>USP4</label>
    </interactant>
    <organismsDiffer>false</organismsDiffer>
    <experiments>4</experiments>
</comment>
<comment type="interaction">
    <interactant intactId="EBI-2902702">
        <id>P29274</id>
    </interactant>
    <interactant intactId="EBI-22114623">
        <id>Q5T9L3-1</id>
        <label>WLS</label>
    </interactant>
    <organismsDiffer>false</organismsDiffer>
    <experiments>3</experiments>
</comment>
<comment type="interaction">
    <interactant intactId="EBI-2902702">
        <id>P29274</id>
    </interactant>
    <interactant intactId="EBI-2902778">
        <id>P31424-1</id>
        <label>Grm5</label>
    </interactant>
    <organismsDiffer>true</organismsDiffer>
    <experiments>3</experiments>
</comment>
<comment type="subcellular location">
    <subcellularLocation>
        <location evidence="2">Cell membrane</location>
        <topology evidence="2">Multi-pass membrane protein</topology>
    </subcellularLocation>
    <text evidence="2">Colocalizes with GAS2L2 at neuronal processes.</text>
</comment>
<comment type="domain">
    <text>The cytoplasmic C-terminal domain is necessary for targeting the non-ubiquitinated form of this protein to the cell surface.</text>
</comment>
<comment type="PTM">
    <text evidence="7">Ubiquitinated. Deubiquitinated by USP4; leading to stabilization and expression at the cell surface.</text>
</comment>
<comment type="similarity">
    <text evidence="4">Belongs to the G-protein coupled receptor 1 family.</text>
</comment>
<comment type="sequence caution" evidence="11">
    <conflict type="erroneous initiation">
        <sequence resource="EMBL-CDS" id="AAA58356"/>
    </conflict>
</comment>
<accession>P29274</accession>
<accession>B2R7E0</accession>
<evidence type="ECO:0000250" key="1">
    <source>
        <dbReference type="UniProtKB" id="P11617"/>
    </source>
</evidence>
<evidence type="ECO:0000250" key="2">
    <source>
        <dbReference type="UniProtKB" id="P30543"/>
    </source>
</evidence>
<evidence type="ECO:0000255" key="3"/>
<evidence type="ECO:0000255" key="4">
    <source>
        <dbReference type="PROSITE-ProRule" id="PRU00521"/>
    </source>
</evidence>
<evidence type="ECO:0000256" key="5">
    <source>
        <dbReference type="SAM" id="MobiDB-lite"/>
    </source>
</evidence>
<evidence type="ECO:0000269" key="6">
    <source>
    </source>
</evidence>
<evidence type="ECO:0000269" key="7">
    <source>
    </source>
</evidence>
<evidence type="ECO:0000269" key="8">
    <source>
    </source>
</evidence>
<evidence type="ECO:0000269" key="9">
    <source>
    </source>
</evidence>
<evidence type="ECO:0000269" key="10">
    <source>
    </source>
</evidence>
<evidence type="ECO:0000305" key="11"/>
<evidence type="ECO:0007744" key="12">
    <source>
        <dbReference type="PDB" id="2YDO"/>
    </source>
</evidence>
<evidence type="ECO:0007744" key="13">
    <source>
        <dbReference type="PDB" id="2YDV"/>
    </source>
</evidence>
<evidence type="ECO:0007829" key="14">
    <source>
        <dbReference type="PDB" id="2YDV"/>
    </source>
</evidence>
<evidence type="ECO:0007829" key="15">
    <source>
        <dbReference type="PDB" id="3QAK"/>
    </source>
</evidence>
<evidence type="ECO:0007829" key="16">
    <source>
        <dbReference type="PDB" id="3VGA"/>
    </source>
</evidence>
<evidence type="ECO:0007829" key="17">
    <source>
        <dbReference type="PDB" id="5NM4"/>
    </source>
</evidence>
<evidence type="ECO:0007829" key="18">
    <source>
        <dbReference type="PDB" id="8JWY"/>
    </source>
</evidence>
<evidence type="ECO:0007829" key="19">
    <source>
        <dbReference type="PDB" id="8WDT"/>
    </source>
</evidence>